<organism>
    <name type="scientific">Neurospora crassa (strain ATCC 24698 / 74-OR23-1A / CBS 708.71 / DSM 1257 / FGSC 987)</name>
    <dbReference type="NCBI Taxonomy" id="367110"/>
    <lineage>
        <taxon>Eukaryota</taxon>
        <taxon>Fungi</taxon>
        <taxon>Dikarya</taxon>
        <taxon>Ascomycota</taxon>
        <taxon>Pezizomycotina</taxon>
        <taxon>Sordariomycetes</taxon>
        <taxon>Sordariomycetidae</taxon>
        <taxon>Sordariales</taxon>
        <taxon>Sordariaceae</taxon>
        <taxon>Neurospora</taxon>
    </lineage>
</organism>
<evidence type="ECO:0000250" key="1">
    <source>
        <dbReference type="UniProtKB" id="P06744"/>
    </source>
</evidence>
<evidence type="ECO:0000250" key="2">
    <source>
        <dbReference type="UniProtKB" id="P06745"/>
    </source>
</evidence>
<evidence type="ECO:0000250" key="3">
    <source>
        <dbReference type="UniProtKB" id="P78917"/>
    </source>
</evidence>
<evidence type="ECO:0000305" key="4"/>
<name>G6PI_NEUCR</name>
<proteinExistence type="inferred from homology"/>
<gene>
    <name type="primary">pgi-1</name>
    <name type="synonym">emp-2</name>
    <name type="synonym">gpi-1</name>
    <name type="ORF">NCU07281</name>
</gene>
<keyword id="KW-0963">Cytoplasm</keyword>
<keyword id="KW-0312">Gluconeogenesis</keyword>
<keyword id="KW-0324">Glycolysis</keyword>
<keyword id="KW-0413">Isomerase</keyword>
<keyword id="KW-1185">Reference proteome</keyword>
<feature type="chain" id="PRO_0000180576" description="Glucose-6-phosphate isomerase">
    <location>
        <begin position="1"/>
        <end position="561"/>
    </location>
</feature>
<feature type="active site" description="Proton donor" evidence="1">
    <location>
        <position position="370"/>
    </location>
</feature>
<feature type="active site" evidence="1">
    <location>
        <position position="401"/>
    </location>
</feature>
<feature type="active site" evidence="1">
    <location>
        <position position="525"/>
    </location>
</feature>
<feature type="binding site" evidence="2">
    <location>
        <begin position="171"/>
        <end position="172"/>
    </location>
    <ligand>
        <name>D-glucose 6-phosphate</name>
        <dbReference type="ChEBI" id="CHEBI:61548"/>
    </ligand>
</feature>
<feature type="binding site" evidence="2">
    <location>
        <begin position="222"/>
        <end position="227"/>
    </location>
    <ligand>
        <name>D-glucose 6-phosphate</name>
        <dbReference type="ChEBI" id="CHEBI:61548"/>
    </ligand>
</feature>
<feature type="binding site" evidence="2">
    <location>
        <position position="366"/>
    </location>
    <ligand>
        <name>D-glucose 6-phosphate</name>
        <dbReference type="ChEBI" id="CHEBI:61548"/>
    </ligand>
</feature>
<feature type="binding site" evidence="2">
    <location>
        <position position="370"/>
    </location>
    <ligand>
        <name>D-glucose 6-phosphate</name>
        <dbReference type="ChEBI" id="CHEBI:61548"/>
    </ligand>
</feature>
<feature type="binding site" evidence="2">
    <location>
        <position position="401"/>
    </location>
    <ligand>
        <name>D-glucose 6-phosphate</name>
        <dbReference type="ChEBI" id="CHEBI:61548"/>
    </ligand>
</feature>
<feature type="binding site" evidence="2">
    <location>
        <position position="525"/>
    </location>
    <ligand>
        <name>D-glucose 6-phosphate</name>
        <dbReference type="ChEBI" id="CHEBI:61548"/>
    </ligand>
</feature>
<reference key="1">
    <citation type="journal article" date="2003" name="Nature">
        <title>The genome sequence of the filamentous fungus Neurospora crassa.</title>
        <authorList>
            <person name="Galagan J.E."/>
            <person name="Calvo S.E."/>
            <person name="Borkovich K.A."/>
            <person name="Selker E.U."/>
            <person name="Read N.D."/>
            <person name="Jaffe D.B."/>
            <person name="FitzHugh W."/>
            <person name="Ma L.-J."/>
            <person name="Smirnov S."/>
            <person name="Purcell S."/>
            <person name="Rehman B."/>
            <person name="Elkins T."/>
            <person name="Engels R."/>
            <person name="Wang S."/>
            <person name="Nielsen C.B."/>
            <person name="Butler J."/>
            <person name="Endrizzi M."/>
            <person name="Qui D."/>
            <person name="Ianakiev P."/>
            <person name="Bell-Pedersen D."/>
            <person name="Nelson M.A."/>
            <person name="Werner-Washburne M."/>
            <person name="Selitrennikoff C.P."/>
            <person name="Kinsey J.A."/>
            <person name="Braun E.L."/>
            <person name="Zelter A."/>
            <person name="Schulte U."/>
            <person name="Kothe G.O."/>
            <person name="Jedd G."/>
            <person name="Mewes H.-W."/>
            <person name="Staben C."/>
            <person name="Marcotte E."/>
            <person name="Greenberg D."/>
            <person name="Roy A."/>
            <person name="Foley K."/>
            <person name="Naylor J."/>
            <person name="Stange-Thomann N."/>
            <person name="Barrett R."/>
            <person name="Gnerre S."/>
            <person name="Kamal M."/>
            <person name="Kamvysselis M."/>
            <person name="Mauceli E.W."/>
            <person name="Bielke C."/>
            <person name="Rudd S."/>
            <person name="Frishman D."/>
            <person name="Krystofova S."/>
            <person name="Rasmussen C."/>
            <person name="Metzenberg R.L."/>
            <person name="Perkins D.D."/>
            <person name="Kroken S."/>
            <person name="Cogoni C."/>
            <person name="Macino G."/>
            <person name="Catcheside D.E.A."/>
            <person name="Li W."/>
            <person name="Pratt R.J."/>
            <person name="Osmani S.A."/>
            <person name="DeSouza C.P.C."/>
            <person name="Glass N.L."/>
            <person name="Orbach M.J."/>
            <person name="Berglund J.A."/>
            <person name="Voelker R."/>
            <person name="Yarden O."/>
            <person name="Plamann M."/>
            <person name="Seiler S."/>
            <person name="Dunlap J.C."/>
            <person name="Radford A."/>
            <person name="Aramayo R."/>
            <person name="Natvig D.O."/>
            <person name="Alex L.A."/>
            <person name="Mannhaupt G."/>
            <person name="Ebbole D.J."/>
            <person name="Freitag M."/>
            <person name="Paulsen I."/>
            <person name="Sachs M.S."/>
            <person name="Lander E.S."/>
            <person name="Nusbaum C."/>
            <person name="Birren B.W."/>
        </authorList>
    </citation>
    <scope>NUCLEOTIDE SEQUENCE [LARGE SCALE GENOMIC DNA]</scope>
    <source>
        <strain>ATCC 24698 / 74-OR23-1A / CBS 708.71 / DSM 1257 / FGSC 987</strain>
    </source>
</reference>
<dbReference type="EC" id="5.3.1.9" evidence="1"/>
<dbReference type="EMBL" id="CM002239">
    <property type="protein sequence ID" value="EAA32899.1"/>
    <property type="molecule type" value="Genomic_DNA"/>
</dbReference>
<dbReference type="RefSeq" id="XP_962135.1">
    <property type="nucleotide sequence ID" value="XM_957042.3"/>
</dbReference>
<dbReference type="SMR" id="Q7S986"/>
<dbReference type="FunCoup" id="Q7S986">
    <property type="interactions" value="1020"/>
</dbReference>
<dbReference type="STRING" id="367110.Q7S986"/>
<dbReference type="PaxDb" id="5141-EFNCRP00000007100"/>
<dbReference type="EnsemblFungi" id="EAA32899">
    <property type="protein sequence ID" value="EAA32899"/>
    <property type="gene ID" value="NCU07281"/>
</dbReference>
<dbReference type="GeneID" id="3878284"/>
<dbReference type="KEGG" id="ncr:NCU07281"/>
<dbReference type="VEuPathDB" id="FungiDB:NCU07281"/>
<dbReference type="HOGENOM" id="CLU_017947_3_1_1"/>
<dbReference type="InParanoid" id="Q7S986"/>
<dbReference type="OMA" id="DWYRQLW"/>
<dbReference type="OrthoDB" id="5831190at2759"/>
<dbReference type="UniPathway" id="UPA00109">
    <property type="reaction ID" value="UER00181"/>
</dbReference>
<dbReference type="Proteomes" id="UP000001805">
    <property type="component" value="Chromosome 4, Linkage Group IV"/>
</dbReference>
<dbReference type="GO" id="GO:0005829">
    <property type="term" value="C:cytosol"/>
    <property type="evidence" value="ECO:0000318"/>
    <property type="project" value="GO_Central"/>
</dbReference>
<dbReference type="GO" id="GO:0005739">
    <property type="term" value="C:mitochondrion"/>
    <property type="evidence" value="ECO:0007669"/>
    <property type="project" value="EnsemblFungi"/>
</dbReference>
<dbReference type="GO" id="GO:0097367">
    <property type="term" value="F:carbohydrate derivative binding"/>
    <property type="evidence" value="ECO:0007669"/>
    <property type="project" value="InterPro"/>
</dbReference>
<dbReference type="GO" id="GO:0004347">
    <property type="term" value="F:glucose-6-phosphate isomerase activity"/>
    <property type="evidence" value="ECO:0000318"/>
    <property type="project" value="GO_Central"/>
</dbReference>
<dbReference type="GO" id="GO:0048029">
    <property type="term" value="F:monosaccharide binding"/>
    <property type="evidence" value="ECO:0000318"/>
    <property type="project" value="GO_Central"/>
</dbReference>
<dbReference type="GO" id="GO:0006094">
    <property type="term" value="P:gluconeogenesis"/>
    <property type="evidence" value="ECO:0000318"/>
    <property type="project" value="GO_Central"/>
</dbReference>
<dbReference type="GO" id="GO:0051156">
    <property type="term" value="P:glucose 6-phosphate metabolic process"/>
    <property type="evidence" value="ECO:0000318"/>
    <property type="project" value="GO_Central"/>
</dbReference>
<dbReference type="GO" id="GO:0006096">
    <property type="term" value="P:glycolytic process"/>
    <property type="evidence" value="ECO:0000318"/>
    <property type="project" value="GO_Central"/>
</dbReference>
<dbReference type="CDD" id="cd05015">
    <property type="entry name" value="SIS_PGI_1"/>
    <property type="match status" value="1"/>
</dbReference>
<dbReference type="CDD" id="cd05016">
    <property type="entry name" value="SIS_PGI_2"/>
    <property type="match status" value="1"/>
</dbReference>
<dbReference type="FunFam" id="1.10.1390.10:FF:000001">
    <property type="entry name" value="Glucose-6-phosphate isomerase"/>
    <property type="match status" value="1"/>
</dbReference>
<dbReference type="FunFam" id="3.40.50.10490:FF:000004">
    <property type="entry name" value="Glucose-6-phosphate isomerase"/>
    <property type="match status" value="1"/>
</dbReference>
<dbReference type="Gene3D" id="1.10.1390.10">
    <property type="match status" value="1"/>
</dbReference>
<dbReference type="Gene3D" id="3.40.50.10490">
    <property type="entry name" value="Glucose-6-phosphate isomerase like protein, domain 1"/>
    <property type="match status" value="2"/>
</dbReference>
<dbReference type="HAMAP" id="MF_00473">
    <property type="entry name" value="G6P_isomerase"/>
    <property type="match status" value="1"/>
</dbReference>
<dbReference type="InterPro" id="IPR001672">
    <property type="entry name" value="G6P_Isomerase"/>
</dbReference>
<dbReference type="InterPro" id="IPR023096">
    <property type="entry name" value="G6P_Isomerase_C"/>
</dbReference>
<dbReference type="InterPro" id="IPR018189">
    <property type="entry name" value="Phosphoglucose_isomerase_CS"/>
</dbReference>
<dbReference type="InterPro" id="IPR046348">
    <property type="entry name" value="SIS_dom_sf"/>
</dbReference>
<dbReference type="InterPro" id="IPR035476">
    <property type="entry name" value="SIS_PGI_1"/>
</dbReference>
<dbReference type="InterPro" id="IPR035482">
    <property type="entry name" value="SIS_PGI_2"/>
</dbReference>
<dbReference type="NCBIfam" id="NF001211">
    <property type="entry name" value="PRK00179.1"/>
    <property type="match status" value="1"/>
</dbReference>
<dbReference type="PANTHER" id="PTHR11469">
    <property type="entry name" value="GLUCOSE-6-PHOSPHATE ISOMERASE"/>
    <property type="match status" value="1"/>
</dbReference>
<dbReference type="PANTHER" id="PTHR11469:SF1">
    <property type="entry name" value="GLUCOSE-6-PHOSPHATE ISOMERASE"/>
    <property type="match status" value="1"/>
</dbReference>
<dbReference type="Pfam" id="PF00342">
    <property type="entry name" value="PGI"/>
    <property type="match status" value="1"/>
</dbReference>
<dbReference type="PRINTS" id="PR00662">
    <property type="entry name" value="G6PISOMERASE"/>
</dbReference>
<dbReference type="SUPFAM" id="SSF53697">
    <property type="entry name" value="SIS domain"/>
    <property type="match status" value="1"/>
</dbReference>
<dbReference type="PROSITE" id="PS00765">
    <property type="entry name" value="P_GLUCOSE_ISOMERASE_1"/>
    <property type="match status" value="1"/>
</dbReference>
<dbReference type="PROSITE" id="PS00174">
    <property type="entry name" value="P_GLUCOSE_ISOMERASE_2"/>
    <property type="match status" value="1"/>
</dbReference>
<dbReference type="PROSITE" id="PS51463">
    <property type="entry name" value="P_GLUCOSE_ISOMERASE_3"/>
    <property type="match status" value="1"/>
</dbReference>
<accession>Q7S986</accession>
<comment type="function">
    <text evidence="1">In the cytoplasm, catalyzes the conversion of glucose-6-phosphate to fructose-6-phosphate, the second step in glycolysis, and the reverse reaction during gluconeogenesis.</text>
</comment>
<comment type="catalytic activity">
    <reaction evidence="1">
        <text>alpha-D-glucose 6-phosphate = beta-D-fructose 6-phosphate</text>
        <dbReference type="Rhea" id="RHEA:11816"/>
        <dbReference type="ChEBI" id="CHEBI:57634"/>
        <dbReference type="ChEBI" id="CHEBI:58225"/>
        <dbReference type="EC" id="5.3.1.9"/>
    </reaction>
</comment>
<comment type="pathway">
    <text evidence="4">Carbohydrate degradation; glycolysis; D-glyceraldehyde 3-phosphate and glycerone phosphate from D-glucose: step 2/4.</text>
</comment>
<comment type="subunit">
    <text evidence="1">Homodimer.</text>
</comment>
<comment type="subcellular location">
    <subcellularLocation>
        <location evidence="3">Cytoplasm</location>
        <location evidence="3">Cytosol</location>
    </subcellularLocation>
</comment>
<comment type="similarity">
    <text evidence="4">Belongs to the GPI family.</text>
</comment>
<protein>
    <recommendedName>
        <fullName>Glucose-6-phosphate isomerase</fullName>
        <shortName>GPI</shortName>
        <ecNumber evidence="1">5.3.1.9</ecNumber>
    </recommendedName>
    <alternativeName>
        <fullName>Phosphoglucose isomerase</fullName>
        <shortName>PGI</shortName>
    </alternativeName>
    <alternativeName>
        <fullName>Phosphohexose isomerase</fullName>
        <shortName>PHI</shortName>
    </alternativeName>
</protein>
<sequence length="561" mass="61398">MAPANTLSAWSDLQSHHSKVGKTFVLKDAFKSDPERFSKFARTFTLPADISSDSPNATDILFDFSKNLVTEETLDKLVRLAEEAGVEKKRDAMFAGEKINFTEDRAVYHVALRNVSNQEMKVDGVDVMNTKGGVNEVLQHMKEFSEQVRSGEWKGYTGKKLTNIINIGIGGSDLGPVMVTEALKHYGAKDMTLRFVSNVDGTHIAEALAASDPETTLFLIASKTFTTAETITNANTAKSWFLEKTGGQGDITKHFVALSTNEAEVTKFGIDAKNMFGFESWVGGRYSVWSAIGLSVALYVGYENFHKFLAGAHAMDNHFRTAPLKENIPVLGGILSVWYSNFYNAQTHLIAPFDQYLHRFPAYLQQLSMESNGKSITSDGSAAKYTTGPIVFGEPCTNAQHSFFQLVHQGTKLIPADFILAAKSHNPISNNLHQKMLASNYLAQAEALMVGKTAEEVRAEGNVPEHLVPHKVFLGNRPTTSILVGGHIGPAELGALIVYYEHLTFTEGAIWDINSFDQWGVELGKVLAKKILKEIDEPGAGSGHDASTGGLLGAFKKYADF</sequence>